<keyword id="KW-0002">3D-structure</keyword>
<keyword id="KW-0123">Cardiotoxin</keyword>
<keyword id="KW-0204">Cytolysis</keyword>
<keyword id="KW-0903">Direct protein sequencing</keyword>
<keyword id="KW-1015">Disulfide bond</keyword>
<keyword id="KW-0354">Hemolysis</keyword>
<keyword id="KW-0472">Membrane</keyword>
<keyword id="KW-0964">Secreted</keyword>
<keyword id="KW-0732">Signal</keyword>
<keyword id="KW-1052">Target cell membrane</keyword>
<keyword id="KW-1053">Target membrane</keyword>
<keyword id="KW-0800">Toxin</keyword>
<dbReference type="EMBL" id="U58485">
    <property type="protein sequence ID" value="AAB18381.1"/>
    <property type="molecule type" value="mRNA"/>
</dbReference>
<dbReference type="EMBL" id="U58481">
    <property type="protein sequence ID" value="AAB18377.1"/>
    <property type="molecule type" value="mRNA"/>
</dbReference>
<dbReference type="EMBL" id="AJ238734">
    <property type="protein sequence ID" value="CAB42054.1"/>
    <property type="molecule type" value="Genomic_DNA"/>
</dbReference>
<dbReference type="PIR" id="A01710">
    <property type="entry name" value="H3NJ2F"/>
</dbReference>
<dbReference type="PDB" id="1CRE">
    <property type="method" value="NMR"/>
    <property type="chains" value="A=22-81"/>
</dbReference>
<dbReference type="PDB" id="1CRF">
    <property type="method" value="NMR"/>
    <property type="chains" value="A=22-81"/>
</dbReference>
<dbReference type="PDB" id="4OM4">
    <property type="method" value="X-ray"/>
    <property type="resolution" value="2.74 A"/>
    <property type="chains" value="A/B/C/D/E=22-81"/>
</dbReference>
<dbReference type="PDBsum" id="1CRE"/>
<dbReference type="PDBsum" id="1CRF"/>
<dbReference type="PDBsum" id="4OM4"/>
<dbReference type="SMR" id="P01442"/>
<dbReference type="EvolutionaryTrace" id="P01442"/>
<dbReference type="GO" id="GO:0005576">
    <property type="term" value="C:extracellular region"/>
    <property type="evidence" value="ECO:0007669"/>
    <property type="project" value="UniProtKB-SubCell"/>
</dbReference>
<dbReference type="GO" id="GO:0016020">
    <property type="term" value="C:membrane"/>
    <property type="evidence" value="ECO:0007669"/>
    <property type="project" value="UniProtKB-KW"/>
</dbReference>
<dbReference type="GO" id="GO:0044218">
    <property type="term" value="C:other organism cell membrane"/>
    <property type="evidence" value="ECO:0007669"/>
    <property type="project" value="UniProtKB-KW"/>
</dbReference>
<dbReference type="GO" id="GO:0090729">
    <property type="term" value="F:toxin activity"/>
    <property type="evidence" value="ECO:0007669"/>
    <property type="project" value="UniProtKB-KW"/>
</dbReference>
<dbReference type="GO" id="GO:0031640">
    <property type="term" value="P:killing of cells of another organism"/>
    <property type="evidence" value="ECO:0007669"/>
    <property type="project" value="UniProtKB-KW"/>
</dbReference>
<dbReference type="CDD" id="cd00206">
    <property type="entry name" value="TFP_snake_toxin"/>
    <property type="match status" value="1"/>
</dbReference>
<dbReference type="FunFam" id="2.10.60.10:FF:000024">
    <property type="entry name" value="Cytotoxin 1"/>
    <property type="match status" value="1"/>
</dbReference>
<dbReference type="Gene3D" id="2.10.60.10">
    <property type="entry name" value="CD59"/>
    <property type="match status" value="1"/>
</dbReference>
<dbReference type="InterPro" id="IPR003572">
    <property type="entry name" value="Cytotoxin_Cobra"/>
</dbReference>
<dbReference type="InterPro" id="IPR003571">
    <property type="entry name" value="Snake_3FTx"/>
</dbReference>
<dbReference type="InterPro" id="IPR045860">
    <property type="entry name" value="Snake_toxin-like_sf"/>
</dbReference>
<dbReference type="InterPro" id="IPR018354">
    <property type="entry name" value="Snake_toxin_con_site"/>
</dbReference>
<dbReference type="InterPro" id="IPR054131">
    <property type="entry name" value="Toxin_cobra-type"/>
</dbReference>
<dbReference type="Pfam" id="PF21947">
    <property type="entry name" value="Toxin_cobra-type"/>
    <property type="match status" value="1"/>
</dbReference>
<dbReference type="PRINTS" id="PR00282">
    <property type="entry name" value="CYTOTOXIN"/>
</dbReference>
<dbReference type="SUPFAM" id="SSF57302">
    <property type="entry name" value="Snake toxin-like"/>
    <property type="match status" value="1"/>
</dbReference>
<dbReference type="PROSITE" id="PS00272">
    <property type="entry name" value="SNAKE_TOXIN"/>
    <property type="match status" value="1"/>
</dbReference>
<accession>P01442</accession>
<comment type="function">
    <text evidence="4">Basic protein that binds to cell membrane and depolarizes cardiomyocytes. It also shows lytic activities, but 2-fold less important than that of CTX-A4. It binds to the integrin alpha-V/beta-3 (ITGAV/ITGB3) with a moderate affinity. It may interact with sulfatides in the cell membrane which induces pore formation and cell internalization and is responsible for cytotoxicity in cardiomyocytes. It may also target the mitochondrial membrane and induce mitochondrial swelling and fragmentation.</text>
</comment>
<comment type="subunit">
    <text evidence="1">Monomer in solution; Homodimer and oligomer in the presence of negatively charged lipids forming a pore with a size ranging between 20 and 30 Angstroms.</text>
</comment>
<comment type="subcellular location">
    <subcellularLocation>
        <location evidence="10">Secreted</location>
    </subcellularLocation>
    <subcellularLocation>
        <location evidence="1">Target cell membrane</location>
    </subcellularLocation>
</comment>
<comment type="tissue specificity">
    <text evidence="12">Expressed by the venom gland.</text>
</comment>
<comment type="toxic dose">
    <text evidence="3">LD(50) is 2.1 mg/kg by intravenous injection into mice.</text>
</comment>
<comment type="toxic dose">
    <text evidence="3">LD(50) is 56 mg/kg by subcutaneous injection into mice.</text>
</comment>
<comment type="miscellaneous">
    <text evidence="13">Is classified as a S-type cytotoxin, since a serine residue stands at position 49 (Ser-29 in standard classification).</text>
</comment>
<comment type="similarity">
    <text evidence="12">Belongs to the three-finger toxin family. Short-chain subfamily. Type IA cytotoxin sub-subfamily.</text>
</comment>
<organism>
    <name type="scientific">Naja atra</name>
    <name type="common">Chinese cobra</name>
    <dbReference type="NCBI Taxonomy" id="8656"/>
    <lineage>
        <taxon>Eukaryota</taxon>
        <taxon>Metazoa</taxon>
        <taxon>Chordata</taxon>
        <taxon>Craniata</taxon>
        <taxon>Vertebrata</taxon>
        <taxon>Euteleostomi</taxon>
        <taxon>Lepidosauria</taxon>
        <taxon>Squamata</taxon>
        <taxon>Bifurcata</taxon>
        <taxon>Unidentata</taxon>
        <taxon>Episquamata</taxon>
        <taxon>Toxicofera</taxon>
        <taxon>Serpentes</taxon>
        <taxon>Colubroidea</taxon>
        <taxon>Elapidae</taxon>
        <taxon>Elapinae</taxon>
        <taxon>Naja</taxon>
    </lineage>
</organism>
<protein>
    <recommendedName>
        <fullName>Cytotoxin 2</fullName>
    </recommendedName>
    <alternativeName>
        <fullName>Cardiotoxin 1A</fullName>
    </alternativeName>
    <alternativeName>
        <fullName>Cardiotoxin 2</fullName>
        <shortName evidence="6">CTX-2</shortName>
    </alternativeName>
    <alternativeName>
        <fullName evidence="7 9">Cardiotoxin A2</fullName>
        <shortName evidence="7 9">CTX A2</shortName>
    </alternativeName>
    <alternativeName>
        <fullName evidence="8 11">Cardiotoxin II</fullName>
    </alternativeName>
    <alternativeName>
        <fullName evidence="10">Cardiotoxin analog II</fullName>
    </alternativeName>
</protein>
<feature type="signal peptide" evidence="3">
    <location>
        <begin position="1"/>
        <end position="21"/>
    </location>
</feature>
<feature type="chain" id="PRO_0000035371" description="Cytotoxin 2" evidence="3">
    <location>
        <begin position="22"/>
        <end position="81"/>
    </location>
</feature>
<feature type="disulfide bond" evidence="2 4 5 14 15 16">
    <location>
        <begin position="24"/>
        <end position="42"/>
    </location>
</feature>
<feature type="disulfide bond" evidence="2 4 5 14 15 16">
    <location>
        <begin position="35"/>
        <end position="59"/>
    </location>
</feature>
<feature type="disulfide bond" evidence="2 4 5 14 15 16">
    <location>
        <begin position="63"/>
        <end position="74"/>
    </location>
</feature>
<feature type="disulfide bond" evidence="2 4 5 14 15 16">
    <location>
        <begin position="75"/>
        <end position="80"/>
    </location>
</feature>
<feature type="strand" evidence="18">
    <location>
        <begin position="23"/>
        <end position="25"/>
    </location>
</feature>
<feature type="turn" evidence="17">
    <location>
        <begin position="27"/>
        <end position="30"/>
    </location>
</feature>
<feature type="strand" evidence="18">
    <location>
        <begin position="32"/>
        <end position="34"/>
    </location>
</feature>
<feature type="strand" evidence="18">
    <location>
        <begin position="41"/>
        <end position="47"/>
    </location>
</feature>
<feature type="strand" evidence="17">
    <location>
        <begin position="49"/>
        <end position="52"/>
    </location>
</feature>
<feature type="strand" evidence="18">
    <location>
        <begin position="55"/>
        <end position="62"/>
    </location>
</feature>
<feature type="strand" evidence="18">
    <location>
        <begin position="68"/>
        <end position="75"/>
    </location>
</feature>
<feature type="strand" evidence="17">
    <location>
        <begin position="77"/>
        <end position="79"/>
    </location>
</feature>
<name>3SA2_NAJAT</name>
<proteinExistence type="evidence at protein level"/>
<reference key="1">
    <citation type="submission" date="1996-05" db="EMBL/GenBank/DDBJ databases">
        <authorList>
            <person name="Chu R.C."/>
            <person name="Yang C.-C."/>
        </authorList>
    </citation>
    <scope>NUCLEOTIDE SEQUENCE [MRNA]</scope>
    <source>
        <tissue>Venom gland</tissue>
    </source>
</reference>
<reference key="2">
    <citation type="journal article" date="2000" name="Toxicon">
        <title>The multiplicity of cardiotoxins from Naja naja atra (Taiwan cobra) venom.</title>
        <authorList>
            <person name="Chang L.-S."/>
            <person name="Huang H.-B."/>
            <person name="Lin S.-R."/>
        </authorList>
    </citation>
    <scope>NUCLEOTIDE SEQUENCE [GENOMIC DNA]</scope>
    <source>
        <tissue>Liver</tissue>
    </source>
</reference>
<reference key="3">
    <citation type="journal article" date="1977" name="Biochim. Biophys. Acta">
        <title>Primary structures of cardiotoxin analogues II and IV from the venom of Naja naja atra.</title>
        <authorList>
            <person name="Kaneda N."/>
            <person name="Sasaki T."/>
            <person name="Hayashi K."/>
        </authorList>
    </citation>
    <scope>PROTEIN SEQUENCE OF 22-81</scope>
    <scope>TOXIC DOSE</scope>
    <scope>SUBCELLULAR LOCATION</scope>
    <source>
        <tissue>Venom</tissue>
    </source>
</reference>
<reference key="4">
    <citation type="journal article" date="1994" name="J. Biol. Chem.">
        <title>Two distinct types of cardiotoxin as revealed by the structure and activity relationship of their interaction with zwitterionic phospholipid dispersions.</title>
        <authorList>
            <person name="Chien K.-Y."/>
            <person name="Chiang C.-M."/>
            <person name="Hseu Y.-C."/>
            <person name="Vyas A.A."/>
            <person name="Rule G.S."/>
            <person name="Wu W.-G."/>
        </authorList>
    </citation>
    <scope>FUNCTION</scope>
    <scope>APPARTENANCE TO S-TYPE CYTOTOXIN GROUP</scope>
</reference>
<reference key="5">
    <citation type="journal article" date="2006" name="J. Biol. Chem.">
        <title>Non-cytotoxic cobra cardiotoxin A5 binds to alpha(v)beta3 integrin and inhibits bone resorption. Identification of cardiotoxins as non-RGD integrin-binding proteins of the Ly-6 family.</title>
        <authorList>
            <person name="Wu P.-L."/>
            <person name="Lee S.-C."/>
            <person name="Chuang C.-C."/>
            <person name="Mori S."/>
            <person name="Akakura N."/>
            <person name="Wu W.-G."/>
            <person name="Takada Y."/>
        </authorList>
    </citation>
    <scope>BINDING TO INTEGRIN ALPHA-V/BETA-3</scope>
</reference>
<reference key="6">
    <citation type="journal article" date="1994" name="J. Biol. Chem.">
        <title>Cardiotoxin II from Taiwan cobra venom, Naja naja atra. Structure in solution and comparison among homologous cardiotoxins.</title>
        <authorList>
            <person name="Bhaskaran R."/>
            <person name="Huang C.C."/>
            <person name="Tsai Y.C."/>
            <person name="Chang K.D."/>
            <person name="Yu C."/>
        </authorList>
    </citation>
    <scope>STRUCTURE BY NMR</scope>
    <scope>DISULFIDE BONDS</scope>
</reference>
<reference key="7">
    <citation type="journal article" date="1997" name="Biochemistry">
        <title>Comparison of the hemolytic activity and solution structures of two snake venom cardiotoxin analogues which only differ in their N-terminal amino acid.</title>
        <authorList>
            <person name="Jang J.-Y."/>
            <person name="Kumar T.K.S."/>
            <person name="Jayaraman G."/>
            <person name="Yang P.-W."/>
            <person name="Yu C."/>
        </authorList>
    </citation>
    <scope>STRUCTURE BY NMR</scope>
    <scope>FUNCTION</scope>
    <scope>DISULFIDE BONDS</scope>
</reference>
<reference key="8">
    <citation type="journal article" date="1998" name="Biochemistry">
        <title>Main-chain dynamics of cardiotoxin II from Taiwan cobra (Naja naja atra) as studied by carbon-13 NMR at natural abundance: delineation of the role of functionally important residues.</title>
        <authorList>
            <person name="Lee C.-S."/>
            <person name="Kumar T.K.S."/>
            <person name="Lian L.-Y."/>
            <person name="Cheng J.-W."/>
            <person name="Yu C."/>
        </authorList>
    </citation>
    <scope>STRUCTURE BY NMR</scope>
    <scope>DISULFIDE BONDS</scope>
</reference>
<sequence length="81" mass="9041">MKTLLLTLVVVTIVCLDLGYTLKCNKLVPLFYKTCPAGKNLCYKMFMVSNLTVPVKRGCIDVCPKNSALVKYVCCNTDRCN</sequence>
<evidence type="ECO:0000250" key="1">
    <source>
        <dbReference type="UniProtKB" id="P60301"/>
    </source>
</evidence>
<evidence type="ECO:0000269" key="2">
    <source>
    </source>
</evidence>
<evidence type="ECO:0000269" key="3">
    <source>
    </source>
</evidence>
<evidence type="ECO:0000269" key="4">
    <source>
    </source>
</evidence>
<evidence type="ECO:0000269" key="5">
    <source>
    </source>
</evidence>
<evidence type="ECO:0000303" key="6">
    <source>
    </source>
</evidence>
<evidence type="ECO:0000303" key="7">
    <source>
    </source>
</evidence>
<evidence type="ECO:0000303" key="8">
    <source>
    </source>
</evidence>
<evidence type="ECO:0000303" key="9">
    <source>
    </source>
</evidence>
<evidence type="ECO:0000303" key="10">
    <source>
    </source>
</evidence>
<evidence type="ECO:0000303" key="11">
    <source>
    </source>
</evidence>
<evidence type="ECO:0000305" key="12"/>
<evidence type="ECO:0000305" key="13">
    <source>
    </source>
</evidence>
<evidence type="ECO:0000312" key="14">
    <source>
        <dbReference type="PDB" id="1CRE"/>
    </source>
</evidence>
<evidence type="ECO:0000312" key="15">
    <source>
        <dbReference type="PDB" id="1CRF"/>
    </source>
</evidence>
<evidence type="ECO:0000312" key="16">
    <source>
        <dbReference type="PDB" id="4OM4"/>
    </source>
</evidence>
<evidence type="ECO:0007829" key="17">
    <source>
        <dbReference type="PDB" id="1CRE"/>
    </source>
</evidence>
<evidence type="ECO:0007829" key="18">
    <source>
        <dbReference type="PDB" id="4OM4"/>
    </source>
</evidence>